<sequence length="313" mass="33145">MADLGVKAGDKVLLVWSQPSSPTTLKELAESLGAMVGTDGRVSLENMERLMMSSHAASSYDWVLSSVLSDSFSVHTSETLAEMARVIKPDGKLVLEEPVTGTDDQKVRTAEKLISALKLSGLVSVTEVSKEPLTPEAVSALKTYTGFQGNTLSRVRMSASKPNFEVGSSSQLKLSFGKKTSKPVDKPVLDPNAARAWTLSANDMDDDDVDLVDSDALLDADDFKKPDASSLKAPSCGDGTTKKKKACKNCSCGLAEESEQESKGAKTISQPKSACGSCYLGDAFRCASCPYIGMPAFKPGEKIVLANTGLNDA</sequence>
<proteinExistence type="evidence at transcript level"/>
<feature type="chain" id="PRO_0000392303" description="Anamorsin">
    <location>
        <begin position="1"/>
        <end position="313"/>
    </location>
</feature>
<feature type="region of interest" description="N-terminal SAM-like domain" evidence="1">
    <location>
        <begin position="6"/>
        <end position="170"/>
    </location>
</feature>
<feature type="region of interest" description="Linker" evidence="1">
    <location>
        <begin position="171"/>
        <end position="223"/>
    </location>
</feature>
<feature type="region of interest" description="Fe-S binding site A" evidence="1">
    <location>
        <begin position="236"/>
        <end position="252"/>
    </location>
</feature>
<feature type="region of interest" description="Fe-S binding site B" evidence="1">
    <location>
        <begin position="275"/>
        <end position="289"/>
    </location>
</feature>
<feature type="short sequence motif" description="Cx2C motif 1" evidence="1">
    <location>
        <begin position="275"/>
        <end position="278"/>
    </location>
</feature>
<feature type="short sequence motif" description="Cx2C motif 2" evidence="1">
    <location>
        <begin position="286"/>
        <end position="289"/>
    </location>
</feature>
<feature type="binding site" evidence="1">
    <location>
        <position position="236"/>
    </location>
    <ligand>
        <name>[2Fe-2S] cluster</name>
        <dbReference type="ChEBI" id="CHEBI:190135"/>
    </ligand>
</feature>
<feature type="binding site" evidence="1">
    <location>
        <position position="247"/>
    </location>
    <ligand>
        <name>[2Fe-2S] cluster</name>
        <dbReference type="ChEBI" id="CHEBI:190135"/>
    </ligand>
</feature>
<feature type="binding site" evidence="1">
    <location>
        <position position="250"/>
    </location>
    <ligand>
        <name>[2Fe-2S] cluster</name>
        <dbReference type="ChEBI" id="CHEBI:190135"/>
    </ligand>
</feature>
<feature type="binding site" evidence="1">
    <location>
        <position position="252"/>
    </location>
    <ligand>
        <name>[2Fe-2S] cluster</name>
        <dbReference type="ChEBI" id="CHEBI:190135"/>
    </ligand>
</feature>
<feature type="binding site" evidence="1">
    <location>
        <position position="275"/>
    </location>
    <ligand>
        <name>[4Fe-4S] cluster</name>
        <dbReference type="ChEBI" id="CHEBI:49883"/>
    </ligand>
</feature>
<feature type="binding site" evidence="1">
    <location>
        <position position="278"/>
    </location>
    <ligand>
        <name>[4Fe-4S] cluster</name>
        <dbReference type="ChEBI" id="CHEBI:49883"/>
    </ligand>
</feature>
<feature type="binding site" evidence="1">
    <location>
        <position position="286"/>
    </location>
    <ligand>
        <name>[4Fe-4S] cluster</name>
        <dbReference type="ChEBI" id="CHEBI:49883"/>
    </ligand>
</feature>
<feature type="binding site" evidence="1">
    <location>
        <position position="289"/>
    </location>
    <ligand>
        <name>[4Fe-4S] cluster</name>
        <dbReference type="ChEBI" id="CHEBI:49883"/>
    </ligand>
</feature>
<dbReference type="EMBL" id="BT073935">
    <property type="protein sequence ID" value="ACO08359.1"/>
    <property type="molecule type" value="mRNA"/>
</dbReference>
<dbReference type="RefSeq" id="NP_001158582.1">
    <property type="nucleotide sequence ID" value="NM_001165110.1"/>
</dbReference>
<dbReference type="SMR" id="C1BH56"/>
<dbReference type="GeneID" id="100305206"/>
<dbReference type="KEGG" id="omy:100305206"/>
<dbReference type="CTD" id="57019"/>
<dbReference type="OrthoDB" id="311633at2759"/>
<dbReference type="Proteomes" id="UP000694395">
    <property type="component" value="Unplaced"/>
</dbReference>
<dbReference type="GO" id="GO:0005758">
    <property type="term" value="C:mitochondrial intermembrane space"/>
    <property type="evidence" value="ECO:0007669"/>
    <property type="project" value="UniProtKB-SubCell"/>
</dbReference>
<dbReference type="GO" id="GO:0005634">
    <property type="term" value="C:nucleus"/>
    <property type="evidence" value="ECO:0007669"/>
    <property type="project" value="UniProtKB-SubCell"/>
</dbReference>
<dbReference type="GO" id="GO:0051537">
    <property type="term" value="F:2 iron, 2 sulfur cluster binding"/>
    <property type="evidence" value="ECO:0000250"/>
    <property type="project" value="UniProtKB"/>
</dbReference>
<dbReference type="GO" id="GO:0051539">
    <property type="term" value="F:4 iron, 4 sulfur cluster binding"/>
    <property type="evidence" value="ECO:0007669"/>
    <property type="project" value="UniProtKB-KW"/>
</dbReference>
<dbReference type="GO" id="GO:0009055">
    <property type="term" value="F:electron transfer activity"/>
    <property type="evidence" value="ECO:0007669"/>
    <property type="project" value="UniProtKB-UniRule"/>
</dbReference>
<dbReference type="GO" id="GO:0046872">
    <property type="term" value="F:metal ion binding"/>
    <property type="evidence" value="ECO:0007669"/>
    <property type="project" value="UniProtKB-KW"/>
</dbReference>
<dbReference type="GO" id="GO:0006915">
    <property type="term" value="P:apoptotic process"/>
    <property type="evidence" value="ECO:0007669"/>
    <property type="project" value="UniProtKB-KW"/>
</dbReference>
<dbReference type="GO" id="GO:0030097">
    <property type="term" value="P:hemopoiesis"/>
    <property type="evidence" value="ECO:0007669"/>
    <property type="project" value="UniProtKB-UniRule"/>
</dbReference>
<dbReference type="GO" id="GO:0016226">
    <property type="term" value="P:iron-sulfur cluster assembly"/>
    <property type="evidence" value="ECO:0007669"/>
    <property type="project" value="UniProtKB-UniRule"/>
</dbReference>
<dbReference type="GO" id="GO:0043066">
    <property type="term" value="P:negative regulation of apoptotic process"/>
    <property type="evidence" value="ECO:0007669"/>
    <property type="project" value="UniProtKB-UniRule"/>
</dbReference>
<dbReference type="FunFam" id="3.40.50.150:FF:000085">
    <property type="entry name" value="Anamorsin homolog"/>
    <property type="match status" value="1"/>
</dbReference>
<dbReference type="Gene3D" id="3.40.50.150">
    <property type="entry name" value="Vaccinia Virus protein VP39"/>
    <property type="match status" value="1"/>
</dbReference>
<dbReference type="HAMAP" id="MF_03115">
    <property type="entry name" value="Anamorsin"/>
    <property type="match status" value="1"/>
</dbReference>
<dbReference type="InterPro" id="IPR007785">
    <property type="entry name" value="Anamorsin"/>
</dbReference>
<dbReference type="InterPro" id="IPR049011">
    <property type="entry name" value="Anamorsin_N_metazoan"/>
</dbReference>
<dbReference type="InterPro" id="IPR046408">
    <property type="entry name" value="CIAPIN1"/>
</dbReference>
<dbReference type="InterPro" id="IPR029063">
    <property type="entry name" value="SAM-dependent_MTases_sf"/>
</dbReference>
<dbReference type="PANTHER" id="PTHR13273">
    <property type="entry name" value="ANAMORSIN"/>
    <property type="match status" value="1"/>
</dbReference>
<dbReference type="PANTHER" id="PTHR13273:SF14">
    <property type="entry name" value="ANAMORSIN"/>
    <property type="match status" value="1"/>
</dbReference>
<dbReference type="Pfam" id="PF20922">
    <property type="entry name" value="Anamorsin_N"/>
    <property type="match status" value="1"/>
</dbReference>
<dbReference type="Pfam" id="PF05093">
    <property type="entry name" value="CIAPIN1"/>
    <property type="match status" value="2"/>
</dbReference>
<dbReference type="SUPFAM" id="SSF53335">
    <property type="entry name" value="S-adenosyl-L-methionine-dependent methyltransferases"/>
    <property type="match status" value="1"/>
</dbReference>
<organism>
    <name type="scientific">Oncorhynchus mykiss</name>
    <name type="common">Rainbow trout</name>
    <name type="synonym">Salmo gairdneri</name>
    <dbReference type="NCBI Taxonomy" id="8022"/>
    <lineage>
        <taxon>Eukaryota</taxon>
        <taxon>Metazoa</taxon>
        <taxon>Chordata</taxon>
        <taxon>Craniata</taxon>
        <taxon>Vertebrata</taxon>
        <taxon>Euteleostomi</taxon>
        <taxon>Actinopterygii</taxon>
        <taxon>Neopterygii</taxon>
        <taxon>Teleostei</taxon>
        <taxon>Protacanthopterygii</taxon>
        <taxon>Salmoniformes</taxon>
        <taxon>Salmonidae</taxon>
        <taxon>Salmoninae</taxon>
        <taxon>Oncorhynchus</taxon>
    </lineage>
</organism>
<reference key="1">
    <citation type="submission" date="2009-03" db="EMBL/GenBank/DDBJ databases">
        <title>Oncorhynchus mykiss ESTs and full-length cDNAs from White Blood Cells.</title>
        <authorList>
            <person name="Yasuike M."/>
            <person name="von Schalburg K."/>
            <person name="Cooper G."/>
            <person name="Leong J."/>
            <person name="Davidson W.S."/>
            <person name="Koop B.F."/>
        </authorList>
    </citation>
    <scope>NUCLEOTIDE SEQUENCE [LARGE SCALE MRNA]</scope>
    <source>
        <tissue>Leukocyte</tissue>
    </source>
</reference>
<protein>
    <recommendedName>
        <fullName evidence="1">Anamorsin</fullName>
    </recommendedName>
    <alternativeName>
        <fullName evidence="1">Cytokine-induced apoptosis inhibitor 1</fullName>
    </alternativeName>
    <alternativeName>
        <fullName evidence="1">Fe-S cluster assembly protein DRE2 homolog</fullName>
    </alternativeName>
</protein>
<gene>
    <name evidence="1" type="primary">ciapin1</name>
</gene>
<name>CPIN1_ONCMY</name>
<keyword id="KW-0001">2Fe-2S</keyword>
<keyword id="KW-0004">4Fe-4S</keyword>
<keyword id="KW-0053">Apoptosis</keyword>
<keyword id="KW-0963">Cytoplasm</keyword>
<keyword id="KW-0408">Iron</keyword>
<keyword id="KW-0411">Iron-sulfur</keyword>
<keyword id="KW-0479">Metal-binding</keyword>
<keyword id="KW-0496">Mitochondrion</keyword>
<keyword id="KW-0539">Nucleus</keyword>
<accession>C1BH56</accession>
<evidence type="ECO:0000255" key="1">
    <source>
        <dbReference type="HAMAP-Rule" id="MF_03115"/>
    </source>
</evidence>
<comment type="function">
    <text evidence="1">Component of the cytosolic iron-sulfur (Fe-S) protein assembly (CIA) machinery required for the maturation of extramitochondrial Fe-S proteins. Part of an electron transfer chain functioning in an early step of cytosolic Fe-S biogenesis, facilitating the de novo assembly of a [4Fe-4S] cluster on the scaffold complex NUBP1-NUBP2. Electrons are transferred to CIAPIN1 from NADPH via the FAD- and FMN-containing protein NDOR1. NDOR1-CIAPIN1 are also required for the assembly of the diferric tyrosyl radical cofactor of ribonucleotide reductase (RNR), probably by providing electrons for reduction during radical cofactor maturation in the catalytic small subunit. Has anti-apoptotic effects in the cell. Involved in negative control of cell death upon cytokine withdrawal. Promotes development of hematopoietic cells.</text>
</comment>
<comment type="cofactor">
    <cofactor evidence="1">
        <name>[2Fe-2S] cluster</name>
        <dbReference type="ChEBI" id="CHEBI:190135"/>
    </cofactor>
</comment>
<comment type="cofactor">
    <cofactor evidence="1">
        <name>[4Fe-4S] cluster</name>
        <dbReference type="ChEBI" id="CHEBI:49883"/>
    </cofactor>
</comment>
<comment type="subunit">
    <text evidence="1">Monomer. Interacts with ndor1. Interacts with chchd4.</text>
</comment>
<comment type="subcellular location">
    <subcellularLocation>
        <location evidence="1">Cytoplasm</location>
    </subcellularLocation>
    <subcellularLocation>
        <location evidence="1">Nucleus</location>
    </subcellularLocation>
    <subcellularLocation>
        <location evidence="1">Mitochondrion intermembrane space</location>
    </subcellularLocation>
</comment>
<comment type="domain">
    <text evidence="1">The twin Cx2C motifs are involved in the recognition by the mitochondrial CHCHD4/MIA40-GFER/ERV1 disulfide relay system. The formation of 2 disulfide bonds in the Cx2C motifs through dithiol/disulfide exchange reactions effectively traps the protein in the mitochondrial intermembrane space.</text>
</comment>
<comment type="domain">
    <text evidence="1">The C-terminal domain binds 2 Fe-S clusters but is otherwise mostly in an intrinsically disordered conformation.</text>
</comment>
<comment type="domain">
    <text evidence="1">The N-terminal domain has structural similarity with S-adenosyl-L-methionine-dependent methyltransferases, but does not bind S-adenosyl-L-methionine. It is required for correct assembly of the 2 Fe-S clusters.</text>
</comment>
<comment type="similarity">
    <text evidence="1">Belongs to the anamorsin family.</text>
</comment>